<dbReference type="EC" id="2.7.11.16"/>
<dbReference type="EMBL" id="AF040747">
    <property type="protein sequence ID" value="AAC09268.1"/>
    <property type="molecule type" value="mRNA"/>
</dbReference>
<dbReference type="EMBL" id="AF040748">
    <property type="protein sequence ID" value="AAC09269.1"/>
    <property type="molecule type" value="mRNA"/>
</dbReference>
<dbReference type="EMBL" id="AF040749">
    <property type="protein sequence ID" value="AAC09270.1"/>
    <property type="molecule type" value="mRNA"/>
</dbReference>
<dbReference type="EMBL" id="AF040754">
    <property type="protein sequence ID" value="AAC09265.1"/>
    <property type="molecule type" value="Genomic_DNA"/>
</dbReference>
<dbReference type="EMBL" id="Y17967">
    <property type="protein sequence ID" value="CAA76975.1"/>
    <property type="molecule type" value="Genomic_DNA"/>
</dbReference>
<dbReference type="EMBL" id="Y17967">
    <property type="protein sequence ID" value="CAA76976.1"/>
    <property type="molecule type" value="Genomic_DNA"/>
</dbReference>
<dbReference type="EMBL" id="Y15798">
    <property type="protein sequence ID" value="CAA75789.1"/>
    <property type="molecule type" value="mRNA"/>
</dbReference>
<dbReference type="EMBL" id="Y15799">
    <property type="protein sequence ID" value="CAA75790.1"/>
    <property type="molecule type" value="mRNA"/>
</dbReference>
<dbReference type="EMBL" id="BC075719">
    <property type="protein sequence ID" value="AAH75719.1"/>
    <property type="molecule type" value="mRNA"/>
</dbReference>
<dbReference type="CCDS" id="CCDS88457.1">
    <molecule id="O70293-1"/>
</dbReference>
<dbReference type="RefSeq" id="NP_001033107.1">
    <molecule id="O70293-2"/>
    <property type="nucleotide sequence ID" value="NM_001038018.5"/>
</dbReference>
<dbReference type="RefSeq" id="NP_001106182.1">
    <molecule id="O70293-1"/>
    <property type="nucleotide sequence ID" value="NM_001112711.2"/>
</dbReference>
<dbReference type="RefSeq" id="NP_001272992.1">
    <property type="nucleotide sequence ID" value="NM_001286063.1"/>
</dbReference>
<dbReference type="RefSeq" id="NP_001272993.1">
    <property type="nucleotide sequence ID" value="NM_001286064.1"/>
</dbReference>
<dbReference type="RefSeq" id="NP_001272994.1">
    <property type="nucleotide sequence ID" value="NM_001286065.1"/>
</dbReference>
<dbReference type="RefSeq" id="NP_036068.2">
    <property type="nucleotide sequence ID" value="NM_011938.4"/>
</dbReference>
<dbReference type="SMR" id="O70293"/>
<dbReference type="BioGRID" id="204943">
    <property type="interactions" value="2"/>
</dbReference>
<dbReference type="CORUM" id="O70293"/>
<dbReference type="FunCoup" id="O70293">
    <property type="interactions" value="2174"/>
</dbReference>
<dbReference type="IntAct" id="O70293">
    <property type="interactions" value="2"/>
</dbReference>
<dbReference type="MINT" id="O70293"/>
<dbReference type="STRING" id="10090.ENSMUSP00000001115"/>
<dbReference type="iPTMnet" id="O70293"/>
<dbReference type="PhosphoSitePlus" id="O70293"/>
<dbReference type="SwissPalm" id="O70293"/>
<dbReference type="jPOST" id="O70293"/>
<dbReference type="PaxDb" id="10090-ENSMUSP00000001115"/>
<dbReference type="PeptideAtlas" id="O70293"/>
<dbReference type="ProteomicsDB" id="271166">
    <molecule id="O70293-1"/>
</dbReference>
<dbReference type="ProteomicsDB" id="271167">
    <molecule id="O70293-2"/>
</dbReference>
<dbReference type="Pumba" id="O70293"/>
<dbReference type="ABCD" id="O70293">
    <property type="antibodies" value="2 sequenced antibodies"/>
</dbReference>
<dbReference type="Antibodypedia" id="17408">
    <property type="antibodies" value="405 antibodies from 37 providers"/>
</dbReference>
<dbReference type="DNASU" id="26385"/>
<dbReference type="Ensembl" id="ENSMUST00000001115.16">
    <molecule id="O70293-2"/>
    <property type="protein sequence ID" value="ENSMUSP00000001115.9"/>
    <property type="gene ID" value="ENSMUSG00000074886.12"/>
</dbReference>
<dbReference type="Ensembl" id="ENSMUST00000224118.2">
    <molecule id="O70293-1"/>
    <property type="protein sequence ID" value="ENSMUSP00000152968.2"/>
    <property type="gene ID" value="ENSMUSG00000074886.12"/>
</dbReference>
<dbReference type="GeneID" id="26385"/>
<dbReference type="KEGG" id="mmu:26385"/>
<dbReference type="UCSC" id="uc007qqw.2">
    <molecule id="O70293-2"/>
    <property type="organism name" value="mouse"/>
</dbReference>
<dbReference type="UCSC" id="uc011yzt.2">
    <molecule id="O70293-1"/>
    <property type="organism name" value="mouse"/>
</dbReference>
<dbReference type="AGR" id="MGI:1347078"/>
<dbReference type="CTD" id="2870"/>
<dbReference type="MGI" id="MGI:1347078">
    <property type="gene designation" value="Grk6"/>
</dbReference>
<dbReference type="VEuPathDB" id="HostDB:ENSMUSG00000074886"/>
<dbReference type="eggNOG" id="KOG0986">
    <property type="taxonomic scope" value="Eukaryota"/>
</dbReference>
<dbReference type="GeneTree" id="ENSGT00940000158544"/>
<dbReference type="InParanoid" id="O70293"/>
<dbReference type="OrthoDB" id="36550at9989"/>
<dbReference type="PhylomeDB" id="O70293"/>
<dbReference type="TreeFam" id="TF313940"/>
<dbReference type="BRENDA" id="2.7.11.16">
    <property type="organism ID" value="3474"/>
</dbReference>
<dbReference type="Reactome" id="R-MMU-418555">
    <property type="pathway name" value="G alpha (s) signalling events"/>
</dbReference>
<dbReference type="BioGRID-ORCS" id="26385">
    <property type="hits" value="5 hits in 81 CRISPR screens"/>
</dbReference>
<dbReference type="CD-CODE" id="CE726F99">
    <property type="entry name" value="Postsynaptic density"/>
</dbReference>
<dbReference type="ChiTaRS" id="Grk6">
    <property type="organism name" value="mouse"/>
</dbReference>
<dbReference type="PRO" id="PR:O70293"/>
<dbReference type="Proteomes" id="UP000000589">
    <property type="component" value="Chromosome 13"/>
</dbReference>
<dbReference type="RNAct" id="O70293">
    <property type="molecule type" value="protein"/>
</dbReference>
<dbReference type="Bgee" id="ENSMUSG00000074886">
    <property type="expression patterns" value="Expressed in peripheral lymph node and 253 other cell types or tissues"/>
</dbReference>
<dbReference type="ExpressionAtlas" id="O70293">
    <property type="expression patterns" value="baseline and differential"/>
</dbReference>
<dbReference type="GO" id="GO:0016020">
    <property type="term" value="C:membrane"/>
    <property type="evidence" value="ECO:0007669"/>
    <property type="project" value="UniProtKB-SubCell"/>
</dbReference>
<dbReference type="GO" id="GO:0005524">
    <property type="term" value="F:ATP binding"/>
    <property type="evidence" value="ECO:0007669"/>
    <property type="project" value="UniProtKB-KW"/>
</dbReference>
<dbReference type="GO" id="GO:0047696">
    <property type="term" value="F:beta-adrenergic receptor kinase activity"/>
    <property type="evidence" value="ECO:0007669"/>
    <property type="project" value="Ensembl"/>
</dbReference>
<dbReference type="GO" id="GO:0004703">
    <property type="term" value="F:G protein-coupled receptor kinase activity"/>
    <property type="evidence" value="ECO:0007669"/>
    <property type="project" value="UniProtKB-EC"/>
</dbReference>
<dbReference type="GO" id="GO:0004672">
    <property type="term" value="F:protein kinase activity"/>
    <property type="evidence" value="ECO:0000314"/>
    <property type="project" value="MGI"/>
</dbReference>
<dbReference type="GO" id="GO:0016055">
    <property type="term" value="P:Wnt signaling pathway"/>
    <property type="evidence" value="ECO:0007669"/>
    <property type="project" value="UniProtKB-KW"/>
</dbReference>
<dbReference type="CDD" id="cd05630">
    <property type="entry name" value="STKc_GRK6"/>
    <property type="match status" value="1"/>
</dbReference>
<dbReference type="FunFam" id="1.10.167.10:FF:000009">
    <property type="entry name" value="G protein-coupled receptor kinase"/>
    <property type="match status" value="1"/>
</dbReference>
<dbReference type="FunFam" id="1.10.510.10:FF:000074">
    <property type="entry name" value="G protein-coupled receptor kinase"/>
    <property type="match status" value="1"/>
</dbReference>
<dbReference type="Gene3D" id="6.10.250.2260">
    <property type="match status" value="1"/>
</dbReference>
<dbReference type="Gene3D" id="3.30.200.20">
    <property type="entry name" value="Phosphorylase Kinase, domain 1"/>
    <property type="match status" value="1"/>
</dbReference>
<dbReference type="Gene3D" id="1.10.167.10">
    <property type="entry name" value="Regulator of G-protein Signalling 4, domain 2"/>
    <property type="match status" value="1"/>
</dbReference>
<dbReference type="Gene3D" id="1.10.510.10">
    <property type="entry name" value="Transferase(Phosphotransferase) domain 1"/>
    <property type="match status" value="1"/>
</dbReference>
<dbReference type="InterPro" id="IPR000961">
    <property type="entry name" value="AGC-kinase_C"/>
</dbReference>
<dbReference type="InterPro" id="IPR000239">
    <property type="entry name" value="GPCR_kinase"/>
</dbReference>
<dbReference type="InterPro" id="IPR011009">
    <property type="entry name" value="Kinase-like_dom_sf"/>
</dbReference>
<dbReference type="InterPro" id="IPR000719">
    <property type="entry name" value="Prot_kinase_dom"/>
</dbReference>
<dbReference type="InterPro" id="IPR017441">
    <property type="entry name" value="Protein_kinase_ATP_BS"/>
</dbReference>
<dbReference type="InterPro" id="IPR016137">
    <property type="entry name" value="RGS"/>
</dbReference>
<dbReference type="InterPro" id="IPR036305">
    <property type="entry name" value="RGS_sf"/>
</dbReference>
<dbReference type="InterPro" id="IPR044926">
    <property type="entry name" value="RGS_subdomain_2"/>
</dbReference>
<dbReference type="InterPro" id="IPR008271">
    <property type="entry name" value="Ser/Thr_kinase_AS"/>
</dbReference>
<dbReference type="PANTHER" id="PTHR24355:SF15">
    <property type="entry name" value="G PROTEIN-COUPLED RECEPTOR KINASE 6"/>
    <property type="match status" value="1"/>
</dbReference>
<dbReference type="PANTHER" id="PTHR24355">
    <property type="entry name" value="G PROTEIN-COUPLED RECEPTOR KINASE/RIBOSOMAL PROTEIN S6 KINASE"/>
    <property type="match status" value="1"/>
</dbReference>
<dbReference type="Pfam" id="PF00069">
    <property type="entry name" value="Pkinase"/>
    <property type="match status" value="1"/>
</dbReference>
<dbReference type="Pfam" id="PF00615">
    <property type="entry name" value="RGS"/>
    <property type="match status" value="1"/>
</dbReference>
<dbReference type="PRINTS" id="PR00717">
    <property type="entry name" value="GPCRKINASE"/>
</dbReference>
<dbReference type="SMART" id="SM00315">
    <property type="entry name" value="RGS"/>
    <property type="match status" value="1"/>
</dbReference>
<dbReference type="SMART" id="SM00133">
    <property type="entry name" value="S_TK_X"/>
    <property type="match status" value="1"/>
</dbReference>
<dbReference type="SMART" id="SM00220">
    <property type="entry name" value="S_TKc"/>
    <property type="match status" value="1"/>
</dbReference>
<dbReference type="SUPFAM" id="SSF56112">
    <property type="entry name" value="Protein kinase-like (PK-like)"/>
    <property type="match status" value="1"/>
</dbReference>
<dbReference type="SUPFAM" id="SSF48097">
    <property type="entry name" value="Regulator of G-protein signaling, RGS"/>
    <property type="match status" value="1"/>
</dbReference>
<dbReference type="PROSITE" id="PS51285">
    <property type="entry name" value="AGC_KINASE_CTER"/>
    <property type="match status" value="1"/>
</dbReference>
<dbReference type="PROSITE" id="PS00107">
    <property type="entry name" value="PROTEIN_KINASE_ATP"/>
    <property type="match status" value="1"/>
</dbReference>
<dbReference type="PROSITE" id="PS50011">
    <property type="entry name" value="PROTEIN_KINASE_DOM"/>
    <property type="match status" value="1"/>
</dbReference>
<dbReference type="PROSITE" id="PS00108">
    <property type="entry name" value="PROTEIN_KINASE_ST"/>
    <property type="match status" value="1"/>
</dbReference>
<dbReference type="PROSITE" id="PS50132">
    <property type="entry name" value="RGS"/>
    <property type="match status" value="1"/>
</dbReference>
<feature type="chain" id="PRO_0000085975" description="G protein-coupled receptor kinase 6">
    <location>
        <begin position="1"/>
        <end position="576"/>
    </location>
</feature>
<feature type="domain" description="RGS" evidence="4">
    <location>
        <begin position="53"/>
        <end position="171"/>
    </location>
</feature>
<feature type="domain" description="Protein kinase" evidence="3">
    <location>
        <begin position="186"/>
        <end position="448"/>
    </location>
</feature>
<feature type="domain" description="AGC-kinase C-terminal" evidence="5">
    <location>
        <begin position="449"/>
        <end position="514"/>
    </location>
</feature>
<feature type="region of interest" description="N-terminal">
    <location>
        <begin position="1"/>
        <end position="185"/>
    </location>
</feature>
<feature type="active site" description="Proton acceptor" evidence="3 6">
    <location>
        <position position="311"/>
    </location>
</feature>
<feature type="binding site" evidence="3">
    <location>
        <begin position="192"/>
        <end position="200"/>
    </location>
    <ligand>
        <name>ATP</name>
        <dbReference type="ChEBI" id="CHEBI:30616"/>
    </ligand>
</feature>
<feature type="binding site" evidence="3">
    <location>
        <position position="215"/>
    </location>
    <ligand>
        <name>ATP</name>
        <dbReference type="ChEBI" id="CHEBI:30616"/>
    </ligand>
</feature>
<feature type="binding site" evidence="3">
    <location>
        <begin position="264"/>
        <end position="270"/>
    </location>
    <ligand>
        <name>ATP</name>
        <dbReference type="ChEBI" id="CHEBI:30616"/>
    </ligand>
</feature>
<feature type="binding site" evidence="3">
    <location>
        <begin position="315"/>
        <end position="318"/>
    </location>
    <ligand>
        <name>ATP</name>
        <dbReference type="ChEBI" id="CHEBI:30616"/>
    </ligand>
</feature>
<feature type="modified residue" description="Phosphoserine" evidence="14">
    <location>
        <position position="484"/>
    </location>
</feature>
<feature type="modified residue" description="Phosphothreonine" evidence="14">
    <location>
        <position position="485"/>
    </location>
</feature>
<feature type="modified residue" description="Phosphoserine" evidence="14">
    <location>
        <position position="566"/>
    </location>
</feature>
<feature type="modified residue" description="Phosphoserine" evidence="14">
    <location>
        <position position="568"/>
    </location>
</feature>
<feature type="lipid moiety-binding region" description="S-palmitoyl cysteine" evidence="1">
    <location>
        <position position="561"/>
    </location>
</feature>
<feature type="lipid moiety-binding region" description="S-palmitoyl cysteine" evidence="1">
    <location>
        <position position="562"/>
    </location>
</feature>
<feature type="lipid moiety-binding region" description="S-palmitoyl cysteine" evidence="1">
    <location>
        <position position="565"/>
    </location>
</feature>
<feature type="splice variant" id="VSP_004939" description="In isoform GRK6B." evidence="10 11 12">
    <original>DCCGNCSDSEEELPTRL</original>
    <variation>RIAVGTAATVRKSSPPASSPQAEAPTGGWR</variation>
    <location>
        <begin position="560"/>
        <end position="576"/>
    </location>
</feature>
<feature type="sequence conflict" description="In Ref. 1; AAC09265." evidence="13" ref="1">
    <original>R</original>
    <variation>Q</variation>
    <location>
        <position position="98"/>
    </location>
</feature>
<feature type="sequence conflict" description="In Ref. 1; AAC09265." evidence="13" ref="1">
    <original>E</original>
    <variation>K</variation>
    <location>
        <position position="571"/>
    </location>
</feature>
<feature type="modified residue" description="Phosphoserine" evidence="14">
    <location sequence="O70293-2">
        <position position="578"/>
    </location>
</feature>
<sequence length="576" mass="65979">MELENIVANTVLLKAREGGGGNRKGKSKKWRQMLQFPHISQCEELRLSLERDYHSLCERQPIGRLLFREFCATRPELTRCTAFLDGVSEYEVTPDEKRKACGRRLMQNFLSHTGPDLIPEVPRQLVSNCAQRLEQGPCKDLFQELTRLTHEYLSTAPFADYLDSIYFNRFLQWKWLERQPVTKNTFRQYRVLGKGGFGEVCACQVRATGKMYACKKLEKKRIKKRKGEAMALNEKQILEKVNSRFVVSLAYAYETKDALCLVLTLMNGGDLKFHIYHMGQAGFPEARAVFYAAEICCGLEDLHRERIVYRDLKPENILLDDHGHIRISDLGLAVHVPEGQTIKGRVGTVGYMAPEVVRNERYTFSPDWWALGCLLYEMIAGQSPFQQRKKKIKREEVERLVKEVAEEYTDRFSSQARSLCSQLLSKDPAERLGCRGGGAREVKEHPLFKKLNFKRLGAGMLEPPFKPDPQAIYCKDVLDIEQFSTVKGVDLEPTDQDFYQKFATGSVSIPWQNEMVETECFQELNVFGLDGSVPPDLDWKGQPTAPPKKGLLQRLFSRQDCCGNCSDSEEELPTRL</sequence>
<keyword id="KW-0025">Alternative splicing</keyword>
<keyword id="KW-0067">ATP-binding</keyword>
<keyword id="KW-0418">Kinase</keyword>
<keyword id="KW-0449">Lipoprotein</keyword>
<keyword id="KW-0472">Membrane</keyword>
<keyword id="KW-0547">Nucleotide-binding</keyword>
<keyword id="KW-0564">Palmitate</keyword>
<keyword id="KW-0597">Phosphoprotein</keyword>
<keyword id="KW-1185">Reference proteome</keyword>
<keyword id="KW-0723">Serine/threonine-protein kinase</keyword>
<keyword id="KW-0808">Transferase</keyword>
<keyword id="KW-0879">Wnt signaling pathway</keyword>
<gene>
    <name type="primary">Grk6</name>
    <name type="synonym">Gprk6</name>
</gene>
<evidence type="ECO:0000250" key="1"/>
<evidence type="ECO:0000250" key="2">
    <source>
        <dbReference type="UniProtKB" id="P97711"/>
    </source>
</evidence>
<evidence type="ECO:0000255" key="3">
    <source>
        <dbReference type="PROSITE-ProRule" id="PRU00159"/>
    </source>
</evidence>
<evidence type="ECO:0000255" key="4">
    <source>
        <dbReference type="PROSITE-ProRule" id="PRU00171"/>
    </source>
</evidence>
<evidence type="ECO:0000255" key="5">
    <source>
        <dbReference type="PROSITE-ProRule" id="PRU00618"/>
    </source>
</evidence>
<evidence type="ECO:0000255" key="6">
    <source>
        <dbReference type="PROSITE-ProRule" id="PRU10027"/>
    </source>
</evidence>
<evidence type="ECO:0000269" key="7">
    <source>
    </source>
</evidence>
<evidence type="ECO:0000269" key="8">
    <source>
    </source>
</evidence>
<evidence type="ECO:0000269" key="9">
    <source>
    </source>
</evidence>
<evidence type="ECO:0000303" key="10">
    <source>
    </source>
</evidence>
<evidence type="ECO:0000303" key="11">
    <source>
    </source>
</evidence>
<evidence type="ECO:0000303" key="12">
    <source ref="2"/>
</evidence>
<evidence type="ECO:0000305" key="13"/>
<evidence type="ECO:0007744" key="14">
    <source>
    </source>
</evidence>
<protein>
    <recommendedName>
        <fullName>G protein-coupled receptor kinase 6</fullName>
        <ecNumber>2.7.11.16</ecNumber>
    </recommendedName>
    <alternativeName>
        <fullName>G protein-coupled receptor kinase GRK6</fullName>
    </alternativeName>
</protein>
<accession>O70293</accession>
<accession>O70294</accession>
<accession>O70295</accession>
<accession>Q6DI67</accession>
<name>GRK6_MOUSE</name>
<organism>
    <name type="scientific">Mus musculus</name>
    <name type="common">Mouse</name>
    <dbReference type="NCBI Taxonomy" id="10090"/>
    <lineage>
        <taxon>Eukaryota</taxon>
        <taxon>Metazoa</taxon>
        <taxon>Chordata</taxon>
        <taxon>Craniata</taxon>
        <taxon>Vertebrata</taxon>
        <taxon>Euteleostomi</taxon>
        <taxon>Mammalia</taxon>
        <taxon>Eutheria</taxon>
        <taxon>Euarchontoglires</taxon>
        <taxon>Glires</taxon>
        <taxon>Rodentia</taxon>
        <taxon>Myomorpha</taxon>
        <taxon>Muroidea</taxon>
        <taxon>Muridae</taxon>
        <taxon>Murinae</taxon>
        <taxon>Mus</taxon>
        <taxon>Mus</taxon>
    </lineage>
</organism>
<reference key="1">
    <citation type="journal article" date="1999" name="J. Biol. Chem.">
        <title>The GRK4 subfamily of G protein-coupled receptor kinases. Alternative splicing, gene organization, and sequence conservation.</title>
        <authorList>
            <person name="Premont R.T."/>
            <person name="Macrae A.D."/>
            <person name="Aparicio S.A."/>
            <person name="Kendall H.E."/>
            <person name="Welch J.E."/>
            <person name="Lefkowitz R.J."/>
        </authorList>
    </citation>
    <scope>NUCLEOTIDE SEQUENCE [MRNA] (ISOFORMS GRK6A AND GRK6B)</scope>
    <source>
        <strain>129/SvJ</strain>
    </source>
</reference>
<reference key="2">
    <citation type="submission" date="1998-09" db="EMBL/GenBank/DDBJ databases">
        <title>Primary structure of murine G-protein-coupled receptor kinase 6 splice variants predict differential regulation by posttranslational modifications.</title>
        <authorList>
            <person name="Moepps B."/>
            <person name="Vatter P."/>
            <person name="Frode R."/>
            <person name="Waechter F."/>
            <person name="Gierschik P."/>
        </authorList>
    </citation>
    <scope>NUCLEOTIDE SEQUENCE [GENOMIC DNA / MRNA] (ISOFORMS GRK6A AND GRK6B)</scope>
    <source>
        <strain>129/SvJ</strain>
        <strain>C57BL/6J</strain>
        <tissue>Thymus</tissue>
    </source>
</reference>
<reference key="3">
    <citation type="journal article" date="2004" name="Genome Res.">
        <title>The status, quality, and expansion of the NIH full-length cDNA project: the Mammalian Gene Collection (MGC).</title>
        <authorList>
            <consortium name="The MGC Project Team"/>
        </authorList>
    </citation>
    <scope>NUCLEOTIDE SEQUENCE [LARGE SCALE MRNA] (ISOFORM GRK6B)</scope>
    <source>
        <strain>129</strain>
        <tissue>Mammary gland</tissue>
    </source>
</reference>
<reference key="4">
    <citation type="journal article" date="2002" name="Proc. Natl. Acad. Sci. U.S.A.">
        <title>Defective lymphocyte chemotaxis in beta-arrestin2- and GRK6-deficient mice.</title>
        <authorList>
            <person name="Fong A.M."/>
            <person name="Premont R.T."/>
            <person name="Richardson R.M."/>
            <person name="Yu Y.R."/>
            <person name="Lefkowitz R.J."/>
            <person name="Patel D.D."/>
        </authorList>
    </citation>
    <scope>DISRUPTION PHENOTYPE</scope>
    <scope>FUNCTION</scope>
</reference>
<reference key="5">
    <citation type="journal article" date="2003" name="J. Immunol.">
        <title>Increased acute inflammation, leukotriene B4-induced chemotaxis, and signaling in mice deficient for G protein-coupled receptor kinase 6.</title>
        <authorList>
            <person name="Kavelaars A."/>
            <person name="Vroon A."/>
            <person name="Raatgever R.P."/>
            <person name="Fong A.M."/>
            <person name="Premont R.T."/>
            <person name="Patel D.D."/>
            <person name="Lefkowitz R.J."/>
            <person name="Heijnen C.J."/>
        </authorList>
    </citation>
    <scope>DISRUPTION PHENOTYPE</scope>
    <scope>FUNCTION</scope>
</reference>
<reference key="6">
    <citation type="journal article" date="2003" name="Neuron">
        <title>Dopaminergic supersensitivity in G protein-coupled receptor kinase 6-deficient mice.</title>
        <authorList>
            <person name="Gainetdinov R.R."/>
            <person name="Bohn L.M."/>
            <person name="Sotnikova T.D."/>
            <person name="Cyr M."/>
            <person name="Laakso A."/>
            <person name="Macrae A.D."/>
            <person name="Torres G.E."/>
            <person name="Kim K.M."/>
            <person name="Lefkowitz R.J."/>
            <person name="Caron M.G."/>
            <person name="Premont R.T."/>
        </authorList>
    </citation>
    <scope>DISRUPTION PHENOTYPE</scope>
    <scope>FUNCTION</scope>
    <scope>TISSUE SPECIFICITY</scope>
</reference>
<reference key="7">
    <citation type="journal article" date="2010" name="Cell">
        <title>A tissue-specific atlas of mouse protein phosphorylation and expression.</title>
        <authorList>
            <person name="Huttlin E.L."/>
            <person name="Jedrychowski M.P."/>
            <person name="Elias J.E."/>
            <person name="Goswami T."/>
            <person name="Rad R."/>
            <person name="Beausoleil S.A."/>
            <person name="Villen J."/>
            <person name="Haas W."/>
            <person name="Sowa M.E."/>
            <person name="Gygi S.P."/>
        </authorList>
    </citation>
    <scope>PHOSPHORYLATION [LARGE SCALE ANALYSIS] AT SER-484; THR-485; SER-566 AND SER-568</scope>
    <scope>PHOSPHORYLATION [LARGE SCALE ANALYSIS] AT SER-578 (ISOFORM GRK6B)</scope>
    <scope>IDENTIFICATION BY MASS SPECTROMETRY [LARGE SCALE ANALYSIS]</scope>
    <source>
        <tissue>Brain</tissue>
        <tissue>Kidney</tissue>
        <tissue>Lung</tissue>
        <tissue>Spleen</tissue>
        <tissue>Testis</tissue>
    </source>
</reference>
<proteinExistence type="evidence at protein level"/>
<comment type="function">
    <text evidence="1 7 8 9">Specifically phosphorylates the activated forms of G protein-coupled receptors. Such receptor phosphorylation initiates beta-arrestin-mediated receptor desensitization, internalization, and signaling events leading to their desensitization. Seems to be involved in the desensitization of D2-like dopamine receptors in striatum and chemokine receptor CXCR4 which is critical for CXCL12-induced cell chemotaxis (By similarity). Phosphorylates rhodopsin (RHO) (in vitro) and a non G-protein-coupled receptor, LRP6 during Wnt signaling (in vitro) (By similarity).</text>
</comment>
<comment type="catalytic activity">
    <reaction>
        <text>[G-protein-coupled receptor] + ATP = [G-protein-coupled receptor]-phosphate + ADP + H(+)</text>
        <dbReference type="Rhea" id="RHEA:12008"/>
        <dbReference type="Rhea" id="RHEA-COMP:11260"/>
        <dbReference type="Rhea" id="RHEA-COMP:11261"/>
        <dbReference type="ChEBI" id="CHEBI:15378"/>
        <dbReference type="ChEBI" id="CHEBI:30616"/>
        <dbReference type="ChEBI" id="CHEBI:43176"/>
        <dbReference type="ChEBI" id="CHEBI:68546"/>
        <dbReference type="ChEBI" id="CHEBI:456216"/>
        <dbReference type="EC" id="2.7.11.16"/>
    </reaction>
</comment>
<comment type="subunit">
    <text evidence="2">Interacts with GIT1.</text>
</comment>
<comment type="interaction">
    <interactant intactId="EBI-7073604">
        <id>O70293-1</id>
    </interactant>
    <interactant intactId="EBI-7073613">
        <id>Q28619</id>
        <label>NHERF1</label>
    </interactant>
    <organismsDiffer>true</organismsDiffer>
    <experiments>5</experiments>
</comment>
<comment type="subcellular location">
    <subcellularLocation>
        <location>Membrane</location>
        <topology>Lipid-anchor</topology>
    </subcellularLocation>
</comment>
<comment type="alternative products">
    <event type="alternative splicing"/>
    <isoform>
        <id>O70293-1</id>
        <name>GRK6A</name>
        <sequence type="displayed"/>
    </isoform>
    <isoform>
        <id>O70293-2</id>
        <name>GRK6B</name>
        <sequence type="described" ref="VSP_004939"/>
    </isoform>
</comment>
<comment type="tissue specificity">
    <text evidence="8">Expressed in the brain in striatal neurons.</text>
</comment>
<comment type="disruption phenotype">
    <text evidence="7 8 9">Deficient mice show significant altered central dopamine receptors regulation, deficient lymphocyte chemotaxis and increased acute inflammation and neutrophil chemotaxis.</text>
</comment>
<comment type="similarity">
    <text evidence="13">Belongs to the protein kinase superfamily. AGC Ser/Thr protein kinase family. GPRK subfamily.</text>
</comment>